<organism>
    <name type="scientific">Rattus norvegicus</name>
    <name type="common">Rat</name>
    <dbReference type="NCBI Taxonomy" id="10116"/>
    <lineage>
        <taxon>Eukaryota</taxon>
        <taxon>Metazoa</taxon>
        <taxon>Chordata</taxon>
        <taxon>Craniata</taxon>
        <taxon>Vertebrata</taxon>
        <taxon>Euteleostomi</taxon>
        <taxon>Mammalia</taxon>
        <taxon>Eutheria</taxon>
        <taxon>Euarchontoglires</taxon>
        <taxon>Glires</taxon>
        <taxon>Rodentia</taxon>
        <taxon>Myomorpha</taxon>
        <taxon>Muroidea</taxon>
        <taxon>Muridae</taxon>
        <taxon>Murinae</taxon>
        <taxon>Rattus</taxon>
    </lineage>
</organism>
<evidence type="ECO:0000250" key="1">
    <source>
        <dbReference type="UniProtKB" id="F6Q1T7"/>
    </source>
</evidence>
<evidence type="ECO:0000250" key="2">
    <source>
        <dbReference type="UniProtKB" id="O09160"/>
    </source>
</evidence>
<evidence type="ECO:0000250" key="3">
    <source>
        <dbReference type="UniProtKB" id="P19526"/>
    </source>
</evidence>
<evidence type="ECO:0000255" key="4"/>
<evidence type="ECO:0000305" key="5"/>
<evidence type="ECO:0000312" key="6">
    <source>
        <dbReference type="RGD" id="2638"/>
    </source>
</evidence>
<protein>
    <recommendedName>
        <fullName evidence="5">Galactoside alpha-(1,2)-fucosyltransferase 1</fullName>
    </recommendedName>
    <alternativeName>
        <fullName>Alpha 1,2-fucosyltransferase A</fullName>
    </alternativeName>
    <alternativeName>
        <fullName>Alpha(1,2)FT 1</fullName>
    </alternativeName>
    <alternativeName>
        <fullName>Fucosyltransferase 1</fullName>
    </alternativeName>
    <alternativeName>
        <fullName>GDP-L-fucose:beta-D-galactoside 2-alpha-L-fucosyltransferase 1</fullName>
    </alternativeName>
    <alternativeName>
        <fullName evidence="2">Type 1 galactoside alpha-(1,2)-fucosyltransferase FUT1</fullName>
        <ecNumber evidence="2">2.4.1.69</ecNumber>
    </alternativeName>
    <alternativeName>
        <fullName evidence="3">Type 2 galactoside alpha-(1,2)-fucosyltransferase FUT1</fullName>
        <ecNumber evidence="3">2.4.1.344</ecNumber>
    </alternativeName>
</protein>
<keyword id="KW-0325">Glycoprotein</keyword>
<keyword id="KW-0328">Glycosyltransferase</keyword>
<keyword id="KW-0333">Golgi apparatus</keyword>
<keyword id="KW-0443">Lipid metabolism</keyword>
<keyword id="KW-0472">Membrane</keyword>
<keyword id="KW-1185">Reference proteome</keyword>
<keyword id="KW-0735">Signal-anchor</keyword>
<keyword id="KW-0808">Transferase</keyword>
<keyword id="KW-0812">Transmembrane</keyword>
<keyword id="KW-1133">Transmembrane helix</keyword>
<accession>Q10980</accession>
<accession>Q549F8</accession>
<reference key="1">
    <citation type="submission" date="1998-06" db="EMBL/GenBank/DDBJ databases">
        <title>Two distinct rat GDP-L-fucose:beta-D-galactoside 2-alpha-L-fucosyltransferase genes.</title>
        <authorList>
            <person name="Soejima M."/>
            <person name="Wang B."/>
            <person name="Koda Y."/>
            <person name="Kimura H."/>
        </authorList>
    </citation>
    <scope>NUCLEOTIDE SEQUENCE [GENOMIC DNA / MRNA]</scope>
    <source>
        <tissue>Colon cancer</tissue>
    </source>
</reference>
<reference key="2">
    <citation type="journal article" date="2001" name="Eur. J. Biochem.">
        <title>Comparison of the three rat GDP-L-fucose:beta-D-galactoside 2-alpha-L-fucosyltransferases FTA, FTB and FTC.</title>
        <authorList>
            <person name="Bureau V."/>
            <person name="Marionneau S."/>
            <person name="Cailleau-Thomas A."/>
            <person name="Le Moullac-Vaidye B."/>
            <person name="Liehr T."/>
            <person name="Le Pendu J."/>
        </authorList>
    </citation>
    <scope>NUCLEOTIDE SEQUENCE [GENOMIC DNA]</scope>
    <scope>FUNCTION</scope>
    <source>
        <strain>BDIX</strain>
    </source>
</reference>
<reference key="3">
    <citation type="journal article" date="1994" name="Biochem. J.">
        <title>Evidence for two distinct alpha(1,2)-fucosyltransferase genes differentially expressed throughout the rat colon.</title>
        <authorList>
            <person name="Piau J.-P."/>
            <person name="Labarriere N."/>
            <person name="Dabouis G."/>
            <person name="Denis M.G."/>
        </authorList>
    </citation>
    <scope>NUCLEOTIDE SEQUENCE [MRNA] OF 169-310</scope>
    <source>
        <strain>BDIX</strain>
    </source>
</reference>
<dbReference type="EC" id="2.4.1.69" evidence="2"/>
<dbReference type="EC" id="2.4.1.344" evidence="3"/>
<dbReference type="EMBL" id="AB015637">
    <property type="protein sequence ID" value="BAA31130.1"/>
    <property type="molecule type" value="Genomic_DNA"/>
</dbReference>
<dbReference type="EMBL" id="AB006137">
    <property type="protein sequence ID" value="BAA21741.1"/>
    <property type="molecule type" value="mRNA"/>
</dbReference>
<dbReference type="EMBL" id="AF131237">
    <property type="protein sequence ID" value="AAD24468.1"/>
    <property type="molecule type" value="Genomic_DNA"/>
</dbReference>
<dbReference type="EMBL" id="L26009">
    <property type="protein sequence ID" value="AAB41514.1"/>
    <property type="molecule type" value="mRNA"/>
</dbReference>
<dbReference type="PIR" id="S51582">
    <property type="entry name" value="S51582"/>
</dbReference>
<dbReference type="RefSeq" id="NP_112515.1">
    <property type="nucleotide sequence ID" value="NM_031236.2"/>
</dbReference>
<dbReference type="RefSeq" id="XP_008757642.1">
    <property type="nucleotide sequence ID" value="XM_008759420.2"/>
</dbReference>
<dbReference type="FunCoup" id="Q10980">
    <property type="interactions" value="13"/>
</dbReference>
<dbReference type="STRING" id="10116.ENSRNOP00000028494"/>
<dbReference type="CAZy" id="GT11">
    <property type="family name" value="Glycosyltransferase Family 11"/>
</dbReference>
<dbReference type="GlyCosmos" id="Q10980">
    <property type="glycosylation" value="3 sites, No reported glycans"/>
</dbReference>
<dbReference type="GlyGen" id="Q10980">
    <property type="glycosylation" value="4 sites"/>
</dbReference>
<dbReference type="iPTMnet" id="Q10980"/>
<dbReference type="PhosphoSitePlus" id="Q10980"/>
<dbReference type="PaxDb" id="10116-ENSRNOP00000028494"/>
<dbReference type="Ensembl" id="ENSRNOT00000028494.4">
    <property type="protein sequence ID" value="ENSRNOP00000028494.2"/>
    <property type="gene ID" value="ENSRNOG00000020995.4"/>
</dbReference>
<dbReference type="GeneID" id="81919"/>
<dbReference type="KEGG" id="rno:81919"/>
<dbReference type="UCSC" id="RGD:2638">
    <property type="organism name" value="rat"/>
</dbReference>
<dbReference type="AGR" id="RGD:2638"/>
<dbReference type="CTD" id="2523"/>
<dbReference type="RGD" id="2638">
    <property type="gene designation" value="Fut1"/>
</dbReference>
<dbReference type="eggNOG" id="ENOG502S316">
    <property type="taxonomic scope" value="Eukaryota"/>
</dbReference>
<dbReference type="GeneTree" id="ENSGT00390000001450"/>
<dbReference type="HOGENOM" id="CLU_043399_0_1_1"/>
<dbReference type="InParanoid" id="Q10980"/>
<dbReference type="OMA" id="WTIHPDG"/>
<dbReference type="OrthoDB" id="3226at2759"/>
<dbReference type="PhylomeDB" id="Q10980"/>
<dbReference type="TreeFam" id="TF315810"/>
<dbReference type="BRENDA" id="2.4.1.344">
    <property type="organism ID" value="5301"/>
</dbReference>
<dbReference type="BRENDA" id="2.4.1.69">
    <property type="organism ID" value="5301"/>
</dbReference>
<dbReference type="Reactome" id="R-RNO-9033807">
    <property type="pathway name" value="ABO blood group biosynthesis"/>
</dbReference>
<dbReference type="Reactome" id="R-RNO-9840309">
    <property type="pathway name" value="Glycosphingolipid biosynthesis"/>
</dbReference>
<dbReference type="SABIO-RK" id="Q10980"/>
<dbReference type="UniPathway" id="UPA00378"/>
<dbReference type="PRO" id="PR:Q10980"/>
<dbReference type="Proteomes" id="UP000002494">
    <property type="component" value="Chromosome 1"/>
</dbReference>
<dbReference type="Bgee" id="ENSRNOG00000020995">
    <property type="expression patterns" value="Expressed in pancreas and 12 other cell types or tissues"/>
</dbReference>
<dbReference type="GO" id="GO:0005794">
    <property type="term" value="C:Golgi apparatus"/>
    <property type="evidence" value="ECO:0000266"/>
    <property type="project" value="RGD"/>
</dbReference>
<dbReference type="GO" id="GO:0032580">
    <property type="term" value="C:Golgi cisterna membrane"/>
    <property type="evidence" value="ECO:0007669"/>
    <property type="project" value="UniProtKB-SubCell"/>
</dbReference>
<dbReference type="GO" id="GO:0031127">
    <property type="term" value="F:alpha-(1,2)-fucosyltransferase activity"/>
    <property type="evidence" value="ECO:0000250"/>
    <property type="project" value="UniProtKB"/>
</dbReference>
<dbReference type="GO" id="GO:0008417">
    <property type="term" value="F:fucosyltransferase activity"/>
    <property type="evidence" value="ECO:0000266"/>
    <property type="project" value="RGD"/>
</dbReference>
<dbReference type="GO" id="GO:0008107">
    <property type="term" value="F:galactoside 2-alpha-L-fucosyltransferase activity"/>
    <property type="evidence" value="ECO:0000266"/>
    <property type="project" value="RGD"/>
</dbReference>
<dbReference type="GO" id="GO:0036065">
    <property type="term" value="P:fucosylation"/>
    <property type="evidence" value="ECO:0000250"/>
    <property type="project" value="UniProtKB"/>
</dbReference>
<dbReference type="GO" id="GO:0006629">
    <property type="term" value="P:lipid metabolic process"/>
    <property type="evidence" value="ECO:0007669"/>
    <property type="project" value="UniProtKB-KW"/>
</dbReference>
<dbReference type="GO" id="GO:0021772">
    <property type="term" value="P:olfactory bulb development"/>
    <property type="evidence" value="ECO:0000250"/>
    <property type="project" value="UniProtKB"/>
</dbReference>
<dbReference type="GO" id="GO:0009312">
    <property type="term" value="P:oligosaccharide biosynthetic process"/>
    <property type="evidence" value="ECO:0000266"/>
    <property type="project" value="RGD"/>
</dbReference>
<dbReference type="GO" id="GO:0001954">
    <property type="term" value="P:positive regulation of cell-matrix adhesion"/>
    <property type="evidence" value="ECO:0000250"/>
    <property type="project" value="UniProtKB"/>
</dbReference>
<dbReference type="GO" id="GO:0010595">
    <property type="term" value="P:positive regulation of endothelial cell migration"/>
    <property type="evidence" value="ECO:0000250"/>
    <property type="project" value="UniProtKB"/>
</dbReference>
<dbReference type="GO" id="GO:1904906">
    <property type="term" value="P:positive regulation of endothelial cell-matrix adhesion via fibronectin"/>
    <property type="evidence" value="ECO:0000250"/>
    <property type="project" value="UniProtKB"/>
</dbReference>
<dbReference type="GO" id="GO:1903672">
    <property type="term" value="P:positive regulation of sprouting angiogenesis"/>
    <property type="evidence" value="ECO:0000250"/>
    <property type="project" value="UniProtKB"/>
</dbReference>
<dbReference type="GO" id="GO:0006486">
    <property type="term" value="P:protein glycosylation"/>
    <property type="evidence" value="ECO:0000250"/>
    <property type="project" value="UniProtKB"/>
</dbReference>
<dbReference type="GO" id="GO:0030155">
    <property type="term" value="P:regulation of cell adhesion"/>
    <property type="evidence" value="ECO:0000250"/>
    <property type="project" value="UniProtKB"/>
</dbReference>
<dbReference type="GO" id="GO:0001936">
    <property type="term" value="P:regulation of endothelial cell proliferation"/>
    <property type="evidence" value="ECO:0000250"/>
    <property type="project" value="UniProtKB"/>
</dbReference>
<dbReference type="CDD" id="cd11301">
    <property type="entry name" value="Fut1_Fut2_like"/>
    <property type="match status" value="1"/>
</dbReference>
<dbReference type="InterPro" id="IPR002516">
    <property type="entry name" value="Glyco_trans_11"/>
</dbReference>
<dbReference type="PANTHER" id="PTHR11927">
    <property type="entry name" value="GALACTOSIDE 2-L-FUCOSYLTRANSFERASE"/>
    <property type="match status" value="1"/>
</dbReference>
<dbReference type="PANTHER" id="PTHR11927:SF4">
    <property type="entry name" value="GALACTOSIDE ALPHA-(1,2)-FUCOSYLTRANSFERASE 1"/>
    <property type="match status" value="1"/>
</dbReference>
<dbReference type="Pfam" id="PF01531">
    <property type="entry name" value="Glyco_transf_11"/>
    <property type="match status" value="1"/>
</dbReference>
<feature type="chain" id="PRO_0000149102" description="Galactoside alpha-(1,2)-fucosyltransferase 1">
    <location>
        <begin position="1"/>
        <end position="376"/>
    </location>
</feature>
<feature type="topological domain" description="Cytoplasmic" evidence="4">
    <location>
        <begin position="1"/>
        <end position="12"/>
    </location>
</feature>
<feature type="transmembrane region" description="Helical; Signal-anchor for type II membrane protein" evidence="4">
    <location>
        <begin position="13"/>
        <end position="29"/>
    </location>
</feature>
<feature type="topological domain" description="Lumenal" evidence="4">
    <location>
        <begin position="30"/>
        <end position="376"/>
    </location>
</feature>
<feature type="glycosylation site" description="N-linked (GlcNAc...) asparagine" evidence="4">
    <location>
        <position position="64"/>
    </location>
</feature>
<feature type="glycosylation site" description="N-linked (GlcNAc...) asparagine" evidence="4">
    <location>
        <position position="302"/>
    </location>
</feature>
<feature type="glycosylation site" description="N-linked (GlcNAc...) asparagine" evidence="4">
    <location>
        <position position="328"/>
    </location>
</feature>
<name>FUT1_RAT</name>
<sequence>MWTPSRKQLCLAFLSVCVLSAGSFFFHLNGGNFFQNALTFSVLCPDYHLLKSPVAMVCLPYPSNASSGSPSCPEQSLLSGTWTITPGGRFGNQMGQYATLLALAQLNGRRAFIQPEMHTTLAPVFRISLPVLDPEVDSLTPWQHLVLHDWMSEEYSHLEDPFLKLSGFPCSWTFFHHLREQIRREFTLHDHLREDAQRLLSGLRIGPAGIRPRTYVGVHVRRGDYLEVMPNRWKGVVGDRAYLQKAMDWFRARHKDPIFVVTSNGMRWCLENIDTSHGDVVFAGNGQEGTPGKDFALLTQCNHTIMTIGTFGFWAAYLAGGDTVYLANFTLPDSEFLKIFRPKAAFLPEWVGINADLSPLQAQFDPWETDSLFRLA</sequence>
<gene>
    <name evidence="6" type="primary">Fut1</name>
    <name type="synonym">Fta</name>
</gene>
<proteinExistence type="evidence at transcript level"/>
<comment type="function">
    <text evidence="2 3">Catalyzes the transfer of L-fucose, from a guanosine diphosphate-beta-L-fucose, to the terminal galactose residue of glycoconjugates through an alpha(1,2) linkage leading to H antigen synthesis that is an intermediate substrate in the synthesis of ABO blood group antigens. H antigen is essential for maturation of the glomerular layer of the main olfactory bulb, in cell migration and early cell-cell contacts during tumor associated angiogenesis (By similarity). Preferentially fucosylates soluble lactose and to a lesser extent fucosylates glycolipids gangliosides GA1 and GM1a (By similarity).</text>
</comment>
<comment type="catalytic activity">
    <reaction evidence="3">
        <text>a beta-D-galactosyl-(1-&gt;4)-N-acetyl-beta-D-glucosaminyl derivative + GDP-beta-L-fucose = an alpha-L-Fuc-(1-&gt;2)-beta-D-Gal-(1-&gt;4)-beta-D-GlcNAc derivative + GDP + H(+)</text>
        <dbReference type="Rhea" id="RHEA:50668"/>
        <dbReference type="ChEBI" id="CHEBI:15378"/>
        <dbReference type="ChEBI" id="CHEBI:57273"/>
        <dbReference type="ChEBI" id="CHEBI:58189"/>
        <dbReference type="ChEBI" id="CHEBI:133507"/>
        <dbReference type="ChEBI" id="CHEBI:133510"/>
        <dbReference type="EC" id="2.4.1.344"/>
    </reaction>
</comment>
<comment type="catalytic activity">
    <reaction evidence="2">
        <text>a ganglioside GA1 + GDP-beta-L-fucose = a ganglioside Fuc-GA1 + GDP + H(+)</text>
        <dbReference type="Rhea" id="RHEA:48320"/>
        <dbReference type="ChEBI" id="CHEBI:15378"/>
        <dbReference type="ChEBI" id="CHEBI:57273"/>
        <dbReference type="ChEBI" id="CHEBI:58189"/>
        <dbReference type="ChEBI" id="CHEBI:88069"/>
        <dbReference type="ChEBI" id="CHEBI:90262"/>
    </reaction>
    <physiologicalReaction direction="left-to-right" evidence="2">
        <dbReference type="Rhea" id="RHEA:48321"/>
    </physiologicalReaction>
</comment>
<comment type="catalytic activity">
    <reaction evidence="2">
        <text>a beta-D-Gal-(1-&gt;3)-beta-D-GlcNAc-(1-&gt;3)-beta-D-Gal-(1-&gt;4)-beta-D-Glc-(1&lt;-&gt;1')-Cer(d18:1(4E)) + GDP-beta-L-fucose = alpha-L-fucosyl-(1-&gt;2)- beta-D-galactosyl-(1-&gt;3)-N-acetyl-beta-D-glucosaminyl-(1-&gt;3)-beta-D-galactosyl-(1-&gt;4)-beta-D-glucosyl-(1&lt;-&gt;1')-N-acylsphing-4-enine + GDP + H(+)</text>
        <dbReference type="Rhea" id="RHEA:32175"/>
        <dbReference type="ChEBI" id="CHEBI:15378"/>
        <dbReference type="ChEBI" id="CHEBI:17292"/>
        <dbReference type="ChEBI" id="CHEBI:28743"/>
        <dbReference type="ChEBI" id="CHEBI:57273"/>
        <dbReference type="ChEBI" id="CHEBI:58189"/>
        <dbReference type="EC" id="2.4.1.69"/>
    </reaction>
    <physiologicalReaction direction="left-to-right" evidence="2">
        <dbReference type="Rhea" id="RHEA:32176"/>
    </physiologicalReaction>
</comment>
<comment type="catalytic activity">
    <reaction evidence="2">
        <text>a neolactoside nLc4Cer(d18:1(4E)) + GDP-beta-L-fucose = a neolactoside IV(2)-alpha-Fuc-nLc4Cer(d18:1(4E)) + GDP + H(+)</text>
        <dbReference type="Rhea" id="RHEA:48304"/>
        <dbReference type="ChEBI" id="CHEBI:15378"/>
        <dbReference type="ChEBI" id="CHEBI:17006"/>
        <dbReference type="ChEBI" id="CHEBI:28691"/>
        <dbReference type="ChEBI" id="CHEBI:57273"/>
        <dbReference type="ChEBI" id="CHEBI:58189"/>
    </reaction>
    <physiologicalReaction direction="left-to-right" evidence="2">
        <dbReference type="Rhea" id="RHEA:48305"/>
    </physiologicalReaction>
</comment>
<comment type="catalytic activity">
    <reaction evidence="1">
        <text>a ganglioside GM1 + GDP-beta-L-fucose = a ganglioside Fuc-GM1 + GDP + H(+)</text>
        <dbReference type="Rhea" id="RHEA:48292"/>
        <dbReference type="ChEBI" id="CHEBI:15378"/>
        <dbReference type="ChEBI" id="CHEBI:57273"/>
        <dbReference type="ChEBI" id="CHEBI:58189"/>
        <dbReference type="ChEBI" id="CHEBI:82639"/>
        <dbReference type="ChEBI" id="CHEBI:90189"/>
    </reaction>
    <physiologicalReaction direction="left-to-right" evidence="1">
        <dbReference type="Rhea" id="RHEA:48293"/>
    </physiologicalReaction>
</comment>
<comment type="catalytic activity">
    <reaction evidence="1">
        <text>beta-D-galactosyl-(1-&gt;3)-N-acetyl-D-galactosamine + GDP-beta-L-fucose = alpha-L-fucosyl-(1-&gt;2)-beta-D-galactosyl-(1-&gt;3)-N-acetyl-D-galactosamine + GDP + H(+)</text>
        <dbReference type="Rhea" id="RHEA:62964"/>
        <dbReference type="ChEBI" id="CHEBI:15378"/>
        <dbReference type="ChEBI" id="CHEBI:57273"/>
        <dbReference type="ChEBI" id="CHEBI:58189"/>
        <dbReference type="ChEBI" id="CHEBI:84728"/>
        <dbReference type="ChEBI" id="CHEBI:546807"/>
    </reaction>
    <physiologicalReaction direction="left-to-right" evidence="1">
        <dbReference type="Rhea" id="RHEA:62965"/>
    </physiologicalReaction>
</comment>
<comment type="pathway">
    <text evidence="3">Protein modification; protein glycosylation.</text>
</comment>
<comment type="subcellular location">
    <subcellularLocation>
        <location evidence="2">Golgi apparatus</location>
        <location evidence="2">Golgi stack membrane</location>
        <topology evidence="2">Single-pass type II membrane protein</topology>
    </subcellularLocation>
    <text evidence="2">Membrane-bound form in trans cisternae of Golgi.</text>
</comment>
<comment type="miscellaneous">
    <text>There are two genes (Fut1 and Fut2) which encode galactoside 2-L-fucosyltransferase. They are expressed in a tissue-specific manner with expression restricted to cells of mesodermal or endodermal origin respectively.</text>
</comment>
<comment type="similarity">
    <text evidence="5">Belongs to the glycosyltransferase 11 family.</text>
</comment>